<feature type="propeptide" id="PRO_0000355770" evidence="1">
    <location>
        <begin position="1"/>
        <end position="2"/>
    </location>
</feature>
<feature type="chain" id="PRO_0000355771" description="Ribulose bisphosphate carboxylase large chain">
    <location>
        <begin position="3"/>
        <end position="475"/>
    </location>
</feature>
<feature type="active site" description="Proton acceptor" evidence="1">
    <location>
        <position position="175"/>
    </location>
</feature>
<feature type="active site" description="Proton acceptor" evidence="1">
    <location>
        <position position="294"/>
    </location>
</feature>
<feature type="binding site" description="in homodimeric partner" evidence="1">
    <location>
        <position position="123"/>
    </location>
    <ligand>
        <name>substrate</name>
    </ligand>
</feature>
<feature type="binding site" evidence="1">
    <location>
        <position position="173"/>
    </location>
    <ligand>
        <name>substrate</name>
    </ligand>
</feature>
<feature type="binding site" evidence="1">
    <location>
        <position position="177"/>
    </location>
    <ligand>
        <name>substrate</name>
    </ligand>
</feature>
<feature type="binding site" description="via carbamate group" evidence="1">
    <location>
        <position position="201"/>
    </location>
    <ligand>
        <name>Mg(2+)</name>
        <dbReference type="ChEBI" id="CHEBI:18420"/>
    </ligand>
</feature>
<feature type="binding site" evidence="1">
    <location>
        <position position="203"/>
    </location>
    <ligand>
        <name>Mg(2+)</name>
        <dbReference type="ChEBI" id="CHEBI:18420"/>
    </ligand>
</feature>
<feature type="binding site" evidence="1">
    <location>
        <position position="204"/>
    </location>
    <ligand>
        <name>Mg(2+)</name>
        <dbReference type="ChEBI" id="CHEBI:18420"/>
    </ligand>
</feature>
<feature type="binding site" evidence="1">
    <location>
        <position position="295"/>
    </location>
    <ligand>
        <name>substrate</name>
    </ligand>
</feature>
<feature type="binding site" evidence="1">
    <location>
        <position position="327"/>
    </location>
    <ligand>
        <name>substrate</name>
    </ligand>
</feature>
<feature type="binding site" evidence="1">
    <location>
        <position position="379"/>
    </location>
    <ligand>
        <name>substrate</name>
    </ligand>
</feature>
<feature type="site" description="Transition state stabilizer" evidence="1">
    <location>
        <position position="334"/>
    </location>
</feature>
<feature type="modified residue" description="N-acetylproline" evidence="1">
    <location>
        <position position="3"/>
    </location>
</feature>
<feature type="modified residue" description="N6,N6,N6-trimethyllysine" evidence="1">
    <location>
        <position position="14"/>
    </location>
</feature>
<feature type="modified residue" description="N6-carboxylysine" evidence="1">
    <location>
        <position position="201"/>
    </location>
</feature>
<feature type="disulfide bond" description="Interchain; in linked form" evidence="1">
    <location>
        <position position="247"/>
    </location>
</feature>
<keyword id="KW-0007">Acetylation</keyword>
<keyword id="KW-0113">Calvin cycle</keyword>
<keyword id="KW-0120">Carbon dioxide fixation</keyword>
<keyword id="KW-0150">Chloroplast</keyword>
<keyword id="KW-1015">Disulfide bond</keyword>
<keyword id="KW-0456">Lyase</keyword>
<keyword id="KW-0460">Magnesium</keyword>
<keyword id="KW-0479">Metal-binding</keyword>
<keyword id="KW-0488">Methylation</keyword>
<keyword id="KW-0503">Monooxygenase</keyword>
<keyword id="KW-0560">Oxidoreductase</keyword>
<keyword id="KW-0601">Photorespiration</keyword>
<keyword id="KW-0602">Photosynthesis</keyword>
<keyword id="KW-0934">Plastid</keyword>
<organism>
    <name type="scientific">Cycas taitungensis</name>
    <name type="common">Prince sago</name>
    <name type="synonym">Cycas taiwaniana</name>
    <dbReference type="NCBI Taxonomy" id="54799"/>
    <lineage>
        <taxon>Eukaryota</taxon>
        <taxon>Viridiplantae</taxon>
        <taxon>Streptophyta</taxon>
        <taxon>Embryophyta</taxon>
        <taxon>Tracheophyta</taxon>
        <taxon>Spermatophyta</taxon>
        <taxon>Cycadidae</taxon>
        <taxon>Cycadales</taxon>
        <taxon>Cycadaceae</taxon>
        <taxon>Cycas</taxon>
    </lineage>
</organism>
<proteinExistence type="inferred from homology"/>
<sequence length="475" mass="52723">MSPKTETKASVGFKAGVKDYRLTYYTPEYQTKDTDILAAFRVTPQPGVPPEEAGAAVAAESSTGTWTTVWTDGLTSLDRYKGRCYDIEPVPGEENQFIAYVAYPLDLFEEGSVTNMFTSIVGNVFGFKALRALRLEDLRVPPAYSKTFQGPPHGIQVERDKLNKYGRPLLGCTIKPKLGLSAKNYGRAVYECLRGGLDFTKDDENVNSQPFMRWRDRFCFCAEAIYKAQAETGEIKGHYLNATAGTCEEMIKRAVFARELGVPIVMHDYLTGGFTANTSLAHYCRDNGLLLHIHRAMHAVIDRQRNHGMHFRVLAKALRMSGGDHIHAGTVVGKLEGERDVTLGFVDLLRDDFIERDRSRGIYFTQDWVSMPGVLPVASGGIHVWHMPALTEIFGDDSVLQFGGGTLGHPWGNAPGAVANRVALEACVQARNEGRDLAREGNEVIREASKWSPELAAACEVWKEIKFEFEAMDVL</sequence>
<comment type="function">
    <text evidence="1">RuBisCO catalyzes two reactions: the carboxylation of D-ribulose 1,5-bisphosphate, the primary event in carbon dioxide fixation, as well as the oxidative fragmentation of the pentose substrate in the photorespiration process. Both reactions occur simultaneously and in competition at the same active site.</text>
</comment>
<comment type="catalytic activity">
    <reaction evidence="1">
        <text>2 (2R)-3-phosphoglycerate + 2 H(+) = D-ribulose 1,5-bisphosphate + CO2 + H2O</text>
        <dbReference type="Rhea" id="RHEA:23124"/>
        <dbReference type="ChEBI" id="CHEBI:15377"/>
        <dbReference type="ChEBI" id="CHEBI:15378"/>
        <dbReference type="ChEBI" id="CHEBI:16526"/>
        <dbReference type="ChEBI" id="CHEBI:57870"/>
        <dbReference type="ChEBI" id="CHEBI:58272"/>
        <dbReference type="EC" id="4.1.1.39"/>
    </reaction>
</comment>
<comment type="catalytic activity">
    <reaction evidence="1">
        <text>D-ribulose 1,5-bisphosphate + O2 = 2-phosphoglycolate + (2R)-3-phosphoglycerate + 2 H(+)</text>
        <dbReference type="Rhea" id="RHEA:36631"/>
        <dbReference type="ChEBI" id="CHEBI:15378"/>
        <dbReference type="ChEBI" id="CHEBI:15379"/>
        <dbReference type="ChEBI" id="CHEBI:57870"/>
        <dbReference type="ChEBI" id="CHEBI:58033"/>
        <dbReference type="ChEBI" id="CHEBI:58272"/>
    </reaction>
</comment>
<comment type="cofactor">
    <cofactor evidence="1">
        <name>Mg(2+)</name>
        <dbReference type="ChEBI" id="CHEBI:18420"/>
    </cofactor>
    <text evidence="1">Binds 1 Mg(2+) ion per subunit.</text>
</comment>
<comment type="subunit">
    <text evidence="1">Heterohexadecamer of 8 large chains and 8 small chains; disulfide-linked. The disulfide link is formed within the large subunit homodimers.</text>
</comment>
<comment type="subcellular location">
    <subcellularLocation>
        <location>Plastid</location>
        <location>Chloroplast</location>
    </subcellularLocation>
</comment>
<comment type="PTM">
    <text evidence="1">The disulfide bond which can form in the large chain dimeric partners within the hexadecamer appears to be associated with oxidative stress and protein turnover.</text>
</comment>
<comment type="miscellaneous">
    <text evidence="1">The basic functional RuBisCO is composed of a large chain homodimer in a 'head-to-tail' conformation. In form I RuBisCO this homodimer is arranged in a barrel-like tetramer with the small subunits forming a tetrameric 'cap' on each end of the 'barrel'.</text>
</comment>
<comment type="similarity">
    <text evidence="1">Belongs to the RuBisCO large chain family. Type I subfamily.</text>
</comment>
<evidence type="ECO:0000255" key="1">
    <source>
        <dbReference type="HAMAP-Rule" id="MF_01338"/>
    </source>
</evidence>
<dbReference type="EC" id="4.1.1.39" evidence="1"/>
<dbReference type="EMBL" id="AP009339">
    <property type="protein sequence ID" value="BAF64951.1"/>
    <property type="molecule type" value="Genomic_DNA"/>
</dbReference>
<dbReference type="RefSeq" id="YP_001312210.1">
    <property type="nucleotide sequence ID" value="NC_009618.1"/>
</dbReference>
<dbReference type="SMR" id="A6H5I5"/>
<dbReference type="GeneID" id="5309485"/>
<dbReference type="GO" id="GO:0009507">
    <property type="term" value="C:chloroplast"/>
    <property type="evidence" value="ECO:0007669"/>
    <property type="project" value="UniProtKB-SubCell"/>
</dbReference>
<dbReference type="GO" id="GO:0000287">
    <property type="term" value="F:magnesium ion binding"/>
    <property type="evidence" value="ECO:0007669"/>
    <property type="project" value="UniProtKB-UniRule"/>
</dbReference>
<dbReference type="GO" id="GO:0004497">
    <property type="term" value="F:monooxygenase activity"/>
    <property type="evidence" value="ECO:0007669"/>
    <property type="project" value="UniProtKB-KW"/>
</dbReference>
<dbReference type="GO" id="GO:0016984">
    <property type="term" value="F:ribulose-bisphosphate carboxylase activity"/>
    <property type="evidence" value="ECO:0007669"/>
    <property type="project" value="UniProtKB-UniRule"/>
</dbReference>
<dbReference type="GO" id="GO:0009853">
    <property type="term" value="P:photorespiration"/>
    <property type="evidence" value="ECO:0007669"/>
    <property type="project" value="UniProtKB-KW"/>
</dbReference>
<dbReference type="GO" id="GO:0019253">
    <property type="term" value="P:reductive pentose-phosphate cycle"/>
    <property type="evidence" value="ECO:0007669"/>
    <property type="project" value="UniProtKB-UniRule"/>
</dbReference>
<dbReference type="CDD" id="cd08212">
    <property type="entry name" value="RuBisCO_large_I"/>
    <property type="match status" value="1"/>
</dbReference>
<dbReference type="FunFam" id="3.20.20.110:FF:000001">
    <property type="entry name" value="Ribulose bisphosphate carboxylase large chain"/>
    <property type="match status" value="1"/>
</dbReference>
<dbReference type="FunFam" id="3.30.70.150:FF:000001">
    <property type="entry name" value="Ribulose bisphosphate carboxylase large chain"/>
    <property type="match status" value="1"/>
</dbReference>
<dbReference type="Gene3D" id="3.20.20.110">
    <property type="entry name" value="Ribulose bisphosphate carboxylase, large subunit, C-terminal domain"/>
    <property type="match status" value="1"/>
</dbReference>
<dbReference type="Gene3D" id="3.30.70.150">
    <property type="entry name" value="RuBisCO large subunit, N-terminal domain"/>
    <property type="match status" value="1"/>
</dbReference>
<dbReference type="HAMAP" id="MF_01338">
    <property type="entry name" value="RuBisCO_L_type1"/>
    <property type="match status" value="1"/>
</dbReference>
<dbReference type="InterPro" id="IPR033966">
    <property type="entry name" value="RuBisCO"/>
</dbReference>
<dbReference type="InterPro" id="IPR020878">
    <property type="entry name" value="RuBisCo_large_chain_AS"/>
</dbReference>
<dbReference type="InterPro" id="IPR000685">
    <property type="entry name" value="RuBisCO_lsu_C"/>
</dbReference>
<dbReference type="InterPro" id="IPR036376">
    <property type="entry name" value="RuBisCO_lsu_C_sf"/>
</dbReference>
<dbReference type="InterPro" id="IPR017443">
    <property type="entry name" value="RuBisCO_lsu_fd_N"/>
</dbReference>
<dbReference type="InterPro" id="IPR036422">
    <property type="entry name" value="RuBisCO_lsu_N_sf"/>
</dbReference>
<dbReference type="InterPro" id="IPR020888">
    <property type="entry name" value="RuBisCO_lsuI"/>
</dbReference>
<dbReference type="NCBIfam" id="NF003252">
    <property type="entry name" value="PRK04208.1"/>
    <property type="match status" value="1"/>
</dbReference>
<dbReference type="PANTHER" id="PTHR42704">
    <property type="entry name" value="RIBULOSE BISPHOSPHATE CARBOXYLASE"/>
    <property type="match status" value="1"/>
</dbReference>
<dbReference type="PANTHER" id="PTHR42704:SF19">
    <property type="entry name" value="RIBULOSE BISPHOSPHATE CARBOXYLASE LARGE CHAIN"/>
    <property type="match status" value="1"/>
</dbReference>
<dbReference type="Pfam" id="PF00016">
    <property type="entry name" value="RuBisCO_large"/>
    <property type="match status" value="1"/>
</dbReference>
<dbReference type="Pfam" id="PF02788">
    <property type="entry name" value="RuBisCO_large_N"/>
    <property type="match status" value="1"/>
</dbReference>
<dbReference type="SFLD" id="SFLDG01052">
    <property type="entry name" value="RuBisCO"/>
    <property type="match status" value="1"/>
</dbReference>
<dbReference type="SFLD" id="SFLDS00014">
    <property type="entry name" value="RuBisCO"/>
    <property type="match status" value="1"/>
</dbReference>
<dbReference type="SFLD" id="SFLDG00301">
    <property type="entry name" value="RuBisCO-like_proteins"/>
    <property type="match status" value="1"/>
</dbReference>
<dbReference type="SUPFAM" id="SSF51649">
    <property type="entry name" value="RuBisCo, C-terminal domain"/>
    <property type="match status" value="1"/>
</dbReference>
<dbReference type="SUPFAM" id="SSF54966">
    <property type="entry name" value="RuBisCO, large subunit, small (N-terminal) domain"/>
    <property type="match status" value="1"/>
</dbReference>
<dbReference type="PROSITE" id="PS00157">
    <property type="entry name" value="RUBISCO_LARGE"/>
    <property type="match status" value="1"/>
</dbReference>
<name>RBL_CYCTA</name>
<reference key="1">
    <citation type="journal article" date="2007" name="Mol. Biol. Evol.">
        <title>Chloroplast genome (cpDNA) of Cycas taitungensis and 56 cp protein-coding genes of Gnetum parvifolium: insights into cpDNA evolution and phylogeny of extant seed plants.</title>
        <authorList>
            <person name="Wu C.-S."/>
            <person name="Wang Y.-N."/>
            <person name="Liu S.-M."/>
            <person name="Chaw S.-M."/>
        </authorList>
    </citation>
    <scope>NUCLEOTIDE SEQUENCE [LARGE SCALE GENOMIC DNA]</scope>
</reference>
<geneLocation type="chloroplast"/>
<accession>A6H5I5</accession>
<protein>
    <recommendedName>
        <fullName evidence="1">Ribulose bisphosphate carboxylase large chain</fullName>
        <shortName evidence="1">RuBisCO large subunit</shortName>
        <ecNumber evidence="1">4.1.1.39</ecNumber>
    </recommendedName>
</protein>
<gene>
    <name evidence="1" type="primary">rbcL</name>
</gene>